<accession>Q5RJN7</accession>
<gene>
    <name type="primary">Garin1a</name>
    <name type="synonym">Fam137b</name>
    <name type="synonym">Fam71f2</name>
</gene>
<keyword id="KW-0333">Golgi apparatus</keyword>
<keyword id="KW-0597">Phosphoprotein</keyword>
<keyword id="KW-1185">Reference proteome</keyword>
<evidence type="ECO:0000250" key="1">
    <source>
        <dbReference type="UniProtKB" id="B2RXB0"/>
    </source>
</evidence>
<evidence type="ECO:0000256" key="2">
    <source>
        <dbReference type="SAM" id="MobiDB-lite"/>
    </source>
</evidence>
<evidence type="ECO:0000305" key="3"/>
<evidence type="ECO:0007744" key="4">
    <source>
    </source>
</evidence>
<reference key="1">
    <citation type="journal article" date="2004" name="Genome Res.">
        <title>The status, quality, and expansion of the NIH full-length cDNA project: the Mammalian Gene Collection (MGC).</title>
        <authorList>
            <consortium name="The MGC Project Team"/>
        </authorList>
    </citation>
    <scope>NUCLEOTIDE SEQUENCE [LARGE SCALE MRNA]</scope>
    <source>
        <tissue>Testis</tissue>
    </source>
</reference>
<reference key="2">
    <citation type="journal article" date="2012" name="Nat. Commun.">
        <title>Quantitative maps of protein phosphorylation sites across 14 different rat organs and tissues.</title>
        <authorList>
            <person name="Lundby A."/>
            <person name="Secher A."/>
            <person name="Lage K."/>
            <person name="Nordsborg N.B."/>
            <person name="Dmytriyev A."/>
            <person name="Lundby C."/>
            <person name="Olsen J.V."/>
        </authorList>
    </citation>
    <scope>PHOSPHORYLATION [LARGE SCALE ANALYSIS] AT SER-220; SER-221; SER-251 AND SER-255</scope>
    <scope>IDENTIFICATION BY MASS SPECTROMETRY [LARGE SCALE ANALYSIS]</scope>
</reference>
<name>GAR1A_RAT</name>
<proteinExistence type="evidence at protein level"/>
<sequence>MSKIRGLPPAIRDPGPGVELGVENGLLCQLIHSPEFNLFSDSVVFESTFIQVTKQGNWMDAYERSATIILGVTSSVPSLPLPNILLMANVTWPQGPFSTCSTLGAPVITLSRILPLKYVELQIYDRTQRILRVRTVTEKIYYLRLHEKHPQAVFRFWIRLVKILQKGLSITTKDPRIHFTHCLVPKMPNSSTETTPESSRPASSQSSETIMLLAAERAGSSVLDLSNRHRFSEDRYTDTKTDNSSNCKTASPVASLIGMPMRATLIHSLWEQEDSCETLLQAPVASSLGDNFLGP</sequence>
<protein>
    <recommendedName>
        <fullName>Golgi-associated RAB2 interactor protein 1A</fullName>
    </recommendedName>
</protein>
<feature type="chain" id="PRO_0000311690" description="Golgi-associated RAB2 interactor protein 1A">
    <location>
        <begin position="1"/>
        <end position="295"/>
    </location>
</feature>
<feature type="region of interest" description="Disordered" evidence="2">
    <location>
        <begin position="187"/>
        <end position="206"/>
    </location>
</feature>
<feature type="compositionally biased region" description="Low complexity" evidence="2">
    <location>
        <begin position="190"/>
        <end position="206"/>
    </location>
</feature>
<feature type="modified residue" description="Phosphoserine" evidence="4">
    <location>
        <position position="220"/>
    </location>
</feature>
<feature type="modified residue" description="Phosphoserine" evidence="4">
    <location>
        <position position="221"/>
    </location>
</feature>
<feature type="modified residue" description="Phosphoserine" evidence="4">
    <location>
        <position position="251"/>
    </location>
</feature>
<feature type="modified residue" description="Phosphoserine" evidence="4">
    <location>
        <position position="255"/>
    </location>
</feature>
<comment type="function">
    <text evidence="1">RAB2B effector protein required for accurate acrosome formation and normal male fertility.</text>
</comment>
<comment type="subunit">
    <text evidence="1">Interacts (via N-terminus) with RAB2B (in GTP-bound form).</text>
</comment>
<comment type="subcellular location">
    <subcellularLocation>
        <location evidence="1">Golgi apparatus</location>
    </subcellularLocation>
</comment>
<comment type="similarity">
    <text evidence="3">Belongs to the GARIN family.</text>
</comment>
<organism>
    <name type="scientific">Rattus norvegicus</name>
    <name type="common">Rat</name>
    <dbReference type="NCBI Taxonomy" id="10116"/>
    <lineage>
        <taxon>Eukaryota</taxon>
        <taxon>Metazoa</taxon>
        <taxon>Chordata</taxon>
        <taxon>Craniata</taxon>
        <taxon>Vertebrata</taxon>
        <taxon>Euteleostomi</taxon>
        <taxon>Mammalia</taxon>
        <taxon>Eutheria</taxon>
        <taxon>Euarchontoglires</taxon>
        <taxon>Glires</taxon>
        <taxon>Rodentia</taxon>
        <taxon>Myomorpha</taxon>
        <taxon>Muroidea</taxon>
        <taxon>Muridae</taxon>
        <taxon>Murinae</taxon>
        <taxon>Rattus</taxon>
    </lineage>
</organism>
<dbReference type="EMBL" id="BC086566">
    <property type="protein sequence ID" value="AAH86566.1"/>
    <property type="molecule type" value="mRNA"/>
</dbReference>
<dbReference type="RefSeq" id="NP_001019494.1">
    <property type="nucleotide sequence ID" value="NM_001024323.1"/>
</dbReference>
<dbReference type="FunCoup" id="Q5RJN7">
    <property type="interactions" value="1"/>
</dbReference>
<dbReference type="STRING" id="10116.ENSRNOP00000057100"/>
<dbReference type="iPTMnet" id="Q5RJN7"/>
<dbReference type="PhosphoSitePlus" id="Q5RJN7"/>
<dbReference type="PaxDb" id="10116-ENSRNOP00000057100"/>
<dbReference type="Ensembl" id="ENSRNOT00000060353.4">
    <property type="protein sequence ID" value="ENSRNOP00000057100.2"/>
    <property type="gene ID" value="ENSRNOG00000039383.4"/>
</dbReference>
<dbReference type="GeneID" id="500060"/>
<dbReference type="KEGG" id="rno:500060"/>
<dbReference type="UCSC" id="RGD:1561814">
    <property type="organism name" value="rat"/>
</dbReference>
<dbReference type="AGR" id="RGD:1561814"/>
<dbReference type="CTD" id="346653"/>
<dbReference type="RGD" id="1561814">
    <property type="gene designation" value="Garin1a"/>
</dbReference>
<dbReference type="eggNOG" id="ENOG502S7XV">
    <property type="taxonomic scope" value="Eukaryota"/>
</dbReference>
<dbReference type="GeneTree" id="ENSGT00940000162027"/>
<dbReference type="HOGENOM" id="CLU_069391_1_0_1"/>
<dbReference type="InParanoid" id="Q5RJN7"/>
<dbReference type="OMA" id="RIEFTHC"/>
<dbReference type="OrthoDB" id="9834631at2759"/>
<dbReference type="PhylomeDB" id="Q5RJN7"/>
<dbReference type="TreeFam" id="TF336050"/>
<dbReference type="PRO" id="PR:Q5RJN7"/>
<dbReference type="Proteomes" id="UP000002494">
    <property type="component" value="Chromosome 4"/>
</dbReference>
<dbReference type="Bgee" id="ENSRNOG00000039383">
    <property type="expression patterns" value="Expressed in testis"/>
</dbReference>
<dbReference type="GO" id="GO:0005794">
    <property type="term" value="C:Golgi apparatus"/>
    <property type="evidence" value="ECO:0000250"/>
    <property type="project" value="UniProtKB"/>
</dbReference>
<dbReference type="GO" id="GO:0001675">
    <property type="term" value="P:acrosome assembly"/>
    <property type="evidence" value="ECO:0000250"/>
    <property type="project" value="UniProtKB"/>
</dbReference>
<dbReference type="InterPro" id="IPR022168">
    <property type="entry name" value="GARIL-like_Rab2B-bd"/>
</dbReference>
<dbReference type="PANTHER" id="PTHR22574">
    <property type="match status" value="1"/>
</dbReference>
<dbReference type="PANTHER" id="PTHR22574:SF10">
    <property type="entry name" value="GOLGI-ASSOCIATED RAB2 INTERACTOR PROTEIN 1A"/>
    <property type="match status" value="1"/>
</dbReference>
<dbReference type="Pfam" id="PF12480">
    <property type="entry name" value="GARIL_Rab2_bd"/>
    <property type="match status" value="1"/>
</dbReference>